<keyword id="KW-1185">Reference proteome</keyword>
<keyword id="KW-0687">Ribonucleoprotein</keyword>
<keyword id="KW-0689">Ribosomal protein</keyword>
<sequence length="123" mass="12779">MALNIEEIIASVKEATVLELNDLVKAIEEEFGVTAAAPVAVAGGAAAGGAAEEKTEFDLVLAGAGDQKIKVIKVVREITGLGLKEAKELVDNTPKPLKEGIAKEEAEELKAKLEEVGASVEVK</sequence>
<proteinExistence type="inferred from homology"/>
<gene>
    <name evidence="1" type="primary">rplL</name>
    <name type="ordered locus">BLi00123</name>
    <name type="ordered locus">BL02800</name>
</gene>
<protein>
    <recommendedName>
        <fullName evidence="1">Large ribosomal subunit protein bL12</fullName>
    </recommendedName>
    <alternativeName>
        <fullName evidence="2">50S ribosomal protein L7/L12</fullName>
    </alternativeName>
</protein>
<organism>
    <name type="scientific">Bacillus licheniformis (strain ATCC 14580 / DSM 13 / JCM 2505 / CCUG 7422 / NBRC 12200 / NCIMB 9375 / NCTC 10341 / NRRL NRS-1264 / Gibson 46)</name>
    <dbReference type="NCBI Taxonomy" id="279010"/>
    <lineage>
        <taxon>Bacteria</taxon>
        <taxon>Bacillati</taxon>
        <taxon>Bacillota</taxon>
        <taxon>Bacilli</taxon>
        <taxon>Bacillales</taxon>
        <taxon>Bacillaceae</taxon>
        <taxon>Bacillus</taxon>
    </lineage>
</organism>
<accession>Q65PB7</accession>
<accession>Q62ZQ6</accession>
<evidence type="ECO:0000255" key="1">
    <source>
        <dbReference type="HAMAP-Rule" id="MF_00368"/>
    </source>
</evidence>
<evidence type="ECO:0000305" key="2"/>
<feature type="chain" id="PRO_0000243383" description="Large ribosomal subunit protein bL12">
    <location>
        <begin position="1"/>
        <end position="123"/>
    </location>
</feature>
<dbReference type="EMBL" id="AE017333">
    <property type="protein sequence ID" value="AAU39097.1"/>
    <property type="molecule type" value="Genomic_DNA"/>
</dbReference>
<dbReference type="EMBL" id="CP000002">
    <property type="protein sequence ID" value="AAU21752.2"/>
    <property type="molecule type" value="Genomic_DNA"/>
</dbReference>
<dbReference type="RefSeq" id="WP_003178305.1">
    <property type="nucleotide sequence ID" value="NC_006322.1"/>
</dbReference>
<dbReference type="SMR" id="Q65PB7"/>
<dbReference type="STRING" id="279010.BL02800"/>
<dbReference type="GeneID" id="92858913"/>
<dbReference type="KEGG" id="bld:BLi00123"/>
<dbReference type="KEGG" id="bli:BL02800"/>
<dbReference type="eggNOG" id="COG0222">
    <property type="taxonomic scope" value="Bacteria"/>
</dbReference>
<dbReference type="HOGENOM" id="CLU_086499_3_2_9"/>
<dbReference type="Proteomes" id="UP000000606">
    <property type="component" value="Chromosome"/>
</dbReference>
<dbReference type="GO" id="GO:0022625">
    <property type="term" value="C:cytosolic large ribosomal subunit"/>
    <property type="evidence" value="ECO:0007669"/>
    <property type="project" value="TreeGrafter"/>
</dbReference>
<dbReference type="GO" id="GO:0003729">
    <property type="term" value="F:mRNA binding"/>
    <property type="evidence" value="ECO:0007669"/>
    <property type="project" value="TreeGrafter"/>
</dbReference>
<dbReference type="GO" id="GO:0003735">
    <property type="term" value="F:structural constituent of ribosome"/>
    <property type="evidence" value="ECO:0007669"/>
    <property type="project" value="InterPro"/>
</dbReference>
<dbReference type="GO" id="GO:0006412">
    <property type="term" value="P:translation"/>
    <property type="evidence" value="ECO:0007669"/>
    <property type="project" value="UniProtKB-UniRule"/>
</dbReference>
<dbReference type="CDD" id="cd00387">
    <property type="entry name" value="Ribosomal_L7_L12"/>
    <property type="match status" value="1"/>
</dbReference>
<dbReference type="FunFam" id="1.20.5.710:FF:000002">
    <property type="entry name" value="50S ribosomal protein L7/L12"/>
    <property type="match status" value="1"/>
</dbReference>
<dbReference type="FunFam" id="3.30.1390.10:FF:000001">
    <property type="entry name" value="50S ribosomal protein L7/L12"/>
    <property type="match status" value="1"/>
</dbReference>
<dbReference type="Gene3D" id="3.30.1390.10">
    <property type="match status" value="1"/>
</dbReference>
<dbReference type="Gene3D" id="1.20.5.710">
    <property type="entry name" value="Single helix bin"/>
    <property type="match status" value="1"/>
</dbReference>
<dbReference type="HAMAP" id="MF_00368">
    <property type="entry name" value="Ribosomal_bL12"/>
    <property type="match status" value="1"/>
</dbReference>
<dbReference type="InterPro" id="IPR000206">
    <property type="entry name" value="Ribosomal_bL12"/>
</dbReference>
<dbReference type="InterPro" id="IPR013823">
    <property type="entry name" value="Ribosomal_bL12_C"/>
</dbReference>
<dbReference type="InterPro" id="IPR014719">
    <property type="entry name" value="Ribosomal_bL12_C/ClpS-like"/>
</dbReference>
<dbReference type="InterPro" id="IPR008932">
    <property type="entry name" value="Ribosomal_bL12_oligo"/>
</dbReference>
<dbReference type="InterPro" id="IPR036235">
    <property type="entry name" value="Ribosomal_bL12_oligo_N_sf"/>
</dbReference>
<dbReference type="NCBIfam" id="TIGR00855">
    <property type="entry name" value="L12"/>
    <property type="match status" value="1"/>
</dbReference>
<dbReference type="PANTHER" id="PTHR45987">
    <property type="entry name" value="39S RIBOSOMAL PROTEIN L12"/>
    <property type="match status" value="1"/>
</dbReference>
<dbReference type="PANTHER" id="PTHR45987:SF4">
    <property type="entry name" value="LARGE RIBOSOMAL SUBUNIT PROTEIN BL12M"/>
    <property type="match status" value="1"/>
</dbReference>
<dbReference type="Pfam" id="PF00542">
    <property type="entry name" value="Ribosomal_L12"/>
    <property type="match status" value="1"/>
</dbReference>
<dbReference type="Pfam" id="PF16320">
    <property type="entry name" value="Ribosomal_L12_N"/>
    <property type="match status" value="1"/>
</dbReference>
<dbReference type="SUPFAM" id="SSF54736">
    <property type="entry name" value="ClpS-like"/>
    <property type="match status" value="1"/>
</dbReference>
<dbReference type="SUPFAM" id="SSF48300">
    <property type="entry name" value="Ribosomal protein L7/12, oligomerisation (N-terminal) domain"/>
    <property type="match status" value="1"/>
</dbReference>
<comment type="function">
    <text evidence="1">Forms part of the ribosomal stalk which helps the ribosome interact with GTP-bound translation factors. Is thus essential for accurate translation.</text>
</comment>
<comment type="subunit">
    <text evidence="1">Homodimer. Part of the ribosomal stalk of the 50S ribosomal subunit. Forms a multimeric L10(L12)X complex, where L10 forms an elongated spine to which 2 to 4 L12 dimers bind in a sequential fashion. Binds GTP-bound translation factors.</text>
</comment>
<comment type="similarity">
    <text evidence="1">Belongs to the bacterial ribosomal protein bL12 family.</text>
</comment>
<reference key="1">
    <citation type="journal article" date="2004" name="J. Mol. Microbiol. Biotechnol.">
        <title>The complete genome sequence of Bacillus licheniformis DSM13, an organism with great industrial potential.</title>
        <authorList>
            <person name="Veith B."/>
            <person name="Herzberg C."/>
            <person name="Steckel S."/>
            <person name="Feesche J."/>
            <person name="Maurer K.H."/>
            <person name="Ehrenreich P."/>
            <person name="Baeumer S."/>
            <person name="Henne A."/>
            <person name="Liesegang H."/>
            <person name="Merkl R."/>
            <person name="Ehrenreich A."/>
            <person name="Gottschalk G."/>
        </authorList>
    </citation>
    <scope>NUCLEOTIDE SEQUENCE [LARGE SCALE GENOMIC DNA]</scope>
    <source>
        <strain>ATCC 14580 / DSM 13 / JCM 2505 / CCUG 7422 / NBRC 12200 / NCIMB 9375 / NCTC 10341 / NRRL NRS-1264 / Gibson 46</strain>
    </source>
</reference>
<reference key="2">
    <citation type="journal article" date="2004" name="Genome Biol.">
        <title>Complete genome sequence of the industrial bacterium Bacillus licheniformis and comparisons with closely related Bacillus species.</title>
        <authorList>
            <person name="Rey M.W."/>
            <person name="Ramaiya P."/>
            <person name="Nelson B.A."/>
            <person name="Brody-Karpin S.D."/>
            <person name="Zaretsky E.J."/>
            <person name="Tang M."/>
            <person name="Lopez de Leon A."/>
            <person name="Xiang H."/>
            <person name="Gusti V."/>
            <person name="Clausen I.G."/>
            <person name="Olsen P.B."/>
            <person name="Rasmussen M.D."/>
            <person name="Andersen J.T."/>
            <person name="Joergensen P.L."/>
            <person name="Larsen T.S."/>
            <person name="Sorokin A."/>
            <person name="Bolotin A."/>
            <person name="Lapidus A."/>
            <person name="Galleron N."/>
            <person name="Ehrlich S.D."/>
            <person name="Berka R.M."/>
        </authorList>
    </citation>
    <scope>NUCLEOTIDE SEQUENCE [LARGE SCALE GENOMIC DNA]</scope>
    <source>
        <strain>ATCC 14580 / DSM 13 / JCM 2505 / CCUG 7422 / NBRC 12200 / NCIMB 9375 / NCTC 10341 / NRRL NRS-1264 / Gibson 46</strain>
    </source>
</reference>
<name>RL7_BACLD</name>